<proteinExistence type="inferred from homology"/>
<dbReference type="EC" id="2.5.1.15"/>
<dbReference type="EMBL" id="X68062">
    <property type="protein sequence ID" value="CAA48199.1"/>
    <property type="molecule type" value="Genomic_DNA"/>
</dbReference>
<dbReference type="EMBL" id="X68066">
    <property type="protein sequence ID" value="CAA48203.1"/>
    <property type="molecule type" value="Genomic_DNA"/>
</dbReference>
<dbReference type="EMBL" id="X68069">
    <property type="protein sequence ID" value="CAA48206.1"/>
    <property type="molecule type" value="Genomic_DNA"/>
</dbReference>
<dbReference type="EMBL" id="X87405">
    <property type="protein sequence ID" value="CAA60855.1"/>
    <property type="molecule type" value="Genomic_DNA"/>
</dbReference>
<dbReference type="EMBL" id="AE002098">
    <property type="protein sequence ID" value="AAF42039.1"/>
    <property type="molecule type" value="Genomic_DNA"/>
</dbReference>
<dbReference type="PIR" id="A57423">
    <property type="entry name" value="A57423"/>
</dbReference>
<dbReference type="PIR" id="S25611">
    <property type="entry name" value="S25611"/>
</dbReference>
<dbReference type="PIR" id="S65832">
    <property type="entry name" value="S65832"/>
</dbReference>
<dbReference type="PIR" id="S65839">
    <property type="entry name" value="S65839"/>
</dbReference>
<dbReference type="RefSeq" id="NP_274695.1">
    <property type="nucleotide sequence ID" value="NC_003112.2"/>
</dbReference>
<dbReference type="RefSeq" id="WP_002224358.1">
    <property type="nucleotide sequence ID" value="NC_003112.2"/>
</dbReference>
<dbReference type="SMR" id="Q51161"/>
<dbReference type="FunCoup" id="Q51161">
    <property type="interactions" value="446"/>
</dbReference>
<dbReference type="STRING" id="122586.NMB1691"/>
<dbReference type="PaxDb" id="122586-NMB1691"/>
<dbReference type="KEGG" id="nme:NMB1691"/>
<dbReference type="PATRIC" id="fig|122586.8.peg.2174"/>
<dbReference type="HOGENOM" id="CLU_008023_0_2_4"/>
<dbReference type="InParanoid" id="Q51161"/>
<dbReference type="OrthoDB" id="9811744at2"/>
<dbReference type="UniPathway" id="UPA00077">
    <property type="reaction ID" value="UER00156"/>
</dbReference>
<dbReference type="Proteomes" id="UP000000425">
    <property type="component" value="Chromosome"/>
</dbReference>
<dbReference type="GO" id="GO:0005829">
    <property type="term" value="C:cytosol"/>
    <property type="evidence" value="ECO:0000318"/>
    <property type="project" value="GO_Central"/>
</dbReference>
<dbReference type="GO" id="GO:0004156">
    <property type="term" value="F:dihydropteroate synthase activity"/>
    <property type="evidence" value="ECO:0000318"/>
    <property type="project" value="GO_Central"/>
</dbReference>
<dbReference type="GO" id="GO:0046872">
    <property type="term" value="F:metal ion binding"/>
    <property type="evidence" value="ECO:0007669"/>
    <property type="project" value="UniProtKB-KW"/>
</dbReference>
<dbReference type="GO" id="GO:0046656">
    <property type="term" value="P:folic acid biosynthetic process"/>
    <property type="evidence" value="ECO:0007669"/>
    <property type="project" value="UniProtKB-KW"/>
</dbReference>
<dbReference type="GO" id="GO:0046654">
    <property type="term" value="P:tetrahydrofolate biosynthetic process"/>
    <property type="evidence" value="ECO:0000318"/>
    <property type="project" value="GO_Central"/>
</dbReference>
<dbReference type="CDD" id="cd00739">
    <property type="entry name" value="DHPS"/>
    <property type="match status" value="1"/>
</dbReference>
<dbReference type="FunFam" id="3.20.20.20:FF:000013">
    <property type="entry name" value="Dihydropteroate synthase"/>
    <property type="match status" value="1"/>
</dbReference>
<dbReference type="Gene3D" id="3.20.20.20">
    <property type="entry name" value="Dihydropteroate synthase-like"/>
    <property type="match status" value="1"/>
</dbReference>
<dbReference type="InterPro" id="IPR045031">
    <property type="entry name" value="DHP_synth-like"/>
</dbReference>
<dbReference type="InterPro" id="IPR006390">
    <property type="entry name" value="DHP_synth_dom"/>
</dbReference>
<dbReference type="InterPro" id="IPR011005">
    <property type="entry name" value="Dihydropteroate_synth-like_sf"/>
</dbReference>
<dbReference type="InterPro" id="IPR000489">
    <property type="entry name" value="Pterin-binding_dom"/>
</dbReference>
<dbReference type="NCBIfam" id="TIGR01496">
    <property type="entry name" value="DHPS"/>
    <property type="match status" value="1"/>
</dbReference>
<dbReference type="PANTHER" id="PTHR20941">
    <property type="entry name" value="FOLATE SYNTHESIS PROTEINS"/>
    <property type="match status" value="1"/>
</dbReference>
<dbReference type="PANTHER" id="PTHR20941:SF1">
    <property type="entry name" value="FOLIC ACID SYNTHESIS PROTEIN FOL1"/>
    <property type="match status" value="1"/>
</dbReference>
<dbReference type="Pfam" id="PF00809">
    <property type="entry name" value="Pterin_bind"/>
    <property type="match status" value="1"/>
</dbReference>
<dbReference type="SUPFAM" id="SSF51717">
    <property type="entry name" value="Dihydropteroate synthetase-like"/>
    <property type="match status" value="1"/>
</dbReference>
<dbReference type="PROSITE" id="PS00792">
    <property type="entry name" value="DHPS_1"/>
    <property type="match status" value="1"/>
</dbReference>
<dbReference type="PROSITE" id="PS50972">
    <property type="entry name" value="PTERIN_BINDING"/>
    <property type="match status" value="1"/>
</dbReference>
<keyword id="KW-0289">Folate biosynthesis</keyword>
<keyword id="KW-0460">Magnesium</keyword>
<keyword id="KW-0479">Metal-binding</keyword>
<keyword id="KW-1185">Reference proteome</keyword>
<keyword id="KW-0808">Transferase</keyword>
<sequence length="285" mass="30313">MARHVWQAGRFEIGLDKPKIMGIVNLTPDSFSDGGVYSQNAQTALAHAEQLLKEGADILDIGGESTRSGADYVSPEEEWARVEPVLAEVAGWGVPISLDTRRTVIMEKALALGGIDIINDVAALNDEGAVELLARQADTGICLMHMQGLPKTMQINPKYQDVVGEVARYLKARSAECIAAGIAPQRIILDPGFGSGFGKPLQHNIALMRHLPELMAETGFPLLIGVSRKSTIGELTGEANAAERVHGSVAAALASVARGAQIVRVHDVKATADALKVWEALGINL</sequence>
<evidence type="ECO:0000250" key="1">
    <source>
        <dbReference type="UniProtKB" id="P0AC13"/>
    </source>
</evidence>
<evidence type="ECO:0000250" key="2">
    <source>
        <dbReference type="UniProtKB" id="P9WND1"/>
    </source>
</evidence>
<evidence type="ECO:0000255" key="3">
    <source>
        <dbReference type="PROSITE-ProRule" id="PRU00334"/>
    </source>
</evidence>
<evidence type="ECO:0000305" key="4"/>
<protein>
    <recommendedName>
        <fullName>Dihydropteroate synthase</fullName>
        <shortName>DHPS</shortName>
        <ecNumber>2.5.1.15</ecNumber>
    </recommendedName>
    <alternativeName>
        <fullName>Dihydropteroate pyrophosphorylase</fullName>
    </alternativeName>
</protein>
<name>DHPS_NEIMB</name>
<organism>
    <name type="scientific">Neisseria meningitidis serogroup B (strain ATCC BAA-335 / MC58)</name>
    <dbReference type="NCBI Taxonomy" id="122586"/>
    <lineage>
        <taxon>Bacteria</taxon>
        <taxon>Pseudomonadati</taxon>
        <taxon>Pseudomonadota</taxon>
        <taxon>Betaproteobacteria</taxon>
        <taxon>Neisseriales</taxon>
        <taxon>Neisseriaceae</taxon>
        <taxon>Neisseria</taxon>
    </lineage>
</organism>
<comment type="function">
    <text evidence="1">Catalyzes the condensation of para-aminobenzoate (pABA) with 6-hydroxymethyl-7,8-dihydropterin diphosphate (DHPt-PP) to form 7,8-dihydropteroate (H2Pte), the immediate precursor of folate derivatives.</text>
</comment>
<comment type="catalytic activity">
    <reaction evidence="1">
        <text>(7,8-dihydropterin-6-yl)methyl diphosphate + 4-aminobenzoate = 7,8-dihydropteroate + diphosphate</text>
        <dbReference type="Rhea" id="RHEA:19949"/>
        <dbReference type="ChEBI" id="CHEBI:17836"/>
        <dbReference type="ChEBI" id="CHEBI:17839"/>
        <dbReference type="ChEBI" id="CHEBI:33019"/>
        <dbReference type="ChEBI" id="CHEBI:72950"/>
        <dbReference type="EC" id="2.5.1.15"/>
    </reaction>
</comment>
<comment type="cofactor">
    <cofactor evidence="1">
        <name>Mg(2+)</name>
        <dbReference type="ChEBI" id="CHEBI:18420"/>
    </cofactor>
</comment>
<comment type="pathway">
    <text>Cofactor biosynthesis; tetrahydrofolate biosynthesis; 7,8-dihydrofolate from 2-amino-4-hydroxy-6-hydroxymethyl-7,8-dihydropteridine diphosphate and 4-aminobenzoate: step 1/2.</text>
</comment>
<comment type="subunit">
    <text>Homodimer.</text>
</comment>
<comment type="similarity">
    <text evidence="4">Belongs to the DHPS family.</text>
</comment>
<reference key="1">
    <citation type="journal article" date="1992" name="J. Bacteriol.">
        <title>Transformational exchanges in the dihydropteroate synthase gene of Neisseria meningitidis: a novel mechanism for acquisition of sulfonamide resistance.</title>
        <authorList>
            <person name="Raadstroem P."/>
            <person name="Fermer C."/>
            <person name="Kristiansen B.-E."/>
            <person name="Jenkins A."/>
            <person name="Skoeld O."/>
            <person name="Swedberg G."/>
        </authorList>
    </citation>
    <scope>NUCLEOTIDE SEQUENCE [GENOMIC DNA]</scope>
    <source>
        <strain>952 / Serogroup B / Serotype NT</strain>
        <strain>BT490 / Serogroup B / Serotype 15</strain>
        <strain>MO035 / Serogroup B / Serotype 15</strain>
    </source>
</reference>
<reference key="2">
    <citation type="journal article" date="1995" name="J. Bacteriol.">
        <title>Sulfonamide resistance in Neisseria meningitidis as defined by site-directed mutagenesis could have its origin in other species.</title>
        <authorList>
            <person name="Fermer C."/>
            <person name="Kristiansen B.E."/>
            <person name="Skoeld O."/>
            <person name="Swedberg G."/>
        </authorList>
    </citation>
    <scope>NUCLEOTIDE SEQUENCE [GENOMIC DNA]</scope>
    <source>
        <strain>3976 / Serogroup B / Serotype NT</strain>
    </source>
</reference>
<reference key="3">
    <citation type="journal article" date="2000" name="Science">
        <title>Complete genome sequence of Neisseria meningitidis serogroup B strain MC58.</title>
        <authorList>
            <person name="Tettelin H."/>
            <person name="Saunders N.J."/>
            <person name="Heidelberg J.F."/>
            <person name="Jeffries A.C."/>
            <person name="Nelson K.E."/>
            <person name="Eisen J.A."/>
            <person name="Ketchum K.A."/>
            <person name="Hood D.W."/>
            <person name="Peden J.F."/>
            <person name="Dodson R.J."/>
            <person name="Nelson W.C."/>
            <person name="Gwinn M.L."/>
            <person name="DeBoy R.T."/>
            <person name="Peterson J.D."/>
            <person name="Hickey E.K."/>
            <person name="Haft D.H."/>
            <person name="Salzberg S.L."/>
            <person name="White O."/>
            <person name="Fleischmann R.D."/>
            <person name="Dougherty B.A."/>
            <person name="Mason T.M."/>
            <person name="Ciecko A."/>
            <person name="Parksey D.S."/>
            <person name="Blair E."/>
            <person name="Cittone H."/>
            <person name="Clark E.B."/>
            <person name="Cotton M.D."/>
            <person name="Utterback T.R."/>
            <person name="Khouri H.M."/>
            <person name="Qin H."/>
            <person name="Vamathevan J.J."/>
            <person name="Gill J."/>
            <person name="Scarlato V."/>
            <person name="Masignani V."/>
            <person name="Pizza M."/>
            <person name="Grandi G."/>
            <person name="Sun L."/>
            <person name="Smith H.O."/>
            <person name="Fraser C.M."/>
            <person name="Moxon E.R."/>
            <person name="Rappuoli R."/>
            <person name="Venter J.C."/>
        </authorList>
    </citation>
    <scope>NUCLEOTIDE SEQUENCE [LARGE SCALE GENOMIC DNA]</scope>
    <source>
        <strain>ATCC BAA-335 / MC58</strain>
    </source>
</reference>
<accession>Q51161</accession>
<accession>Q51157</accession>
<accession>Q51158</accession>
<accession>Q51159</accession>
<accession>Q51160</accession>
<accession>Q57214</accession>
<accession>Q60395</accession>
<gene>
    <name type="primary">folP</name>
    <name type="synonym">dhpS</name>
    <name type="ordered locus">NMB1691</name>
</gene>
<feature type="chain" id="PRO_0000168218" description="Dihydropteroate synthase">
    <location>
        <begin position="1"/>
        <end position="285"/>
    </location>
</feature>
<feature type="domain" description="Pterin-binding" evidence="3">
    <location>
        <begin position="18"/>
        <end position="276"/>
    </location>
</feature>
<feature type="binding site" evidence="2">
    <location>
        <position position="25"/>
    </location>
    <ligand>
        <name>Mg(2+)</name>
        <dbReference type="ChEBI" id="CHEBI:18420"/>
    </ligand>
</feature>
<feature type="binding site" evidence="1">
    <location>
        <position position="66"/>
    </location>
    <ligand>
        <name>(7,8-dihydropterin-6-yl)methyl diphosphate</name>
        <dbReference type="ChEBI" id="CHEBI:72950"/>
    </ligand>
</feature>
<feature type="binding site" evidence="1">
    <location>
        <position position="99"/>
    </location>
    <ligand>
        <name>(7,8-dihydropterin-6-yl)methyl diphosphate</name>
        <dbReference type="ChEBI" id="CHEBI:72950"/>
    </ligand>
</feature>
<feature type="binding site" evidence="1">
    <location>
        <position position="119"/>
    </location>
    <ligand>
        <name>(7,8-dihydropterin-6-yl)methyl diphosphate</name>
        <dbReference type="ChEBI" id="CHEBI:72950"/>
    </ligand>
</feature>
<feature type="binding site" evidence="1">
    <location>
        <position position="190"/>
    </location>
    <ligand>
        <name>(7,8-dihydropterin-6-yl)methyl diphosphate</name>
        <dbReference type="ChEBI" id="CHEBI:72950"/>
    </ligand>
</feature>
<feature type="binding site" evidence="1">
    <location>
        <position position="229"/>
    </location>
    <ligand>
        <name>(7,8-dihydropterin-6-yl)methyl diphosphate</name>
        <dbReference type="ChEBI" id="CHEBI:72950"/>
    </ligand>
</feature>
<feature type="binding site" evidence="1">
    <location>
        <begin position="264"/>
        <end position="266"/>
    </location>
    <ligand>
        <name>(7,8-dihydropterin-6-yl)methyl diphosphate</name>
        <dbReference type="ChEBI" id="CHEBI:72950"/>
    </ligand>
</feature>
<feature type="sequence variant" description="In strain: 3976 / Serogroup B / Serotype NT.">
    <original>ARH</original>
    <variation>VGC</variation>
    <location>
        <begin position="2"/>
        <end position="4"/>
    </location>
</feature>
<feature type="sequence variant" description="In strain: 3976 / Serogroup B / Serotype NT.">
    <original>F</original>
    <variation>L</variation>
    <location>
        <position position="31"/>
    </location>
</feature>
<feature type="sequence variant" description="In strain: BT490 / Serogroup B / Serotype 15, 952 / Serogroup B / Serotype NT and 3976 / Serogroup B / Serotype NT.">
    <original>V</original>
    <variation>A</variation>
    <location>
        <position position="36"/>
    </location>
</feature>
<feature type="sequence variant" description="In strain: 3976 / Serogroup B / Serotype NT.">
    <original>Q</original>
    <variation>R</variation>
    <location>
        <position position="42"/>
    </location>
</feature>
<feature type="sequence variant" description="In strain: BT490 / Serogroup B / Serotype 15, 952 / Serogroup B / Serotype NT and 3976 / Serogroup B / Serotype NT.">
    <original>Q</original>
    <variation>R</variation>
    <location>
        <position position="50"/>
    </location>
</feature>
<feature type="sequence variant" description="In strain: BT490 / Serogroup B / Serotype 15, 952 / Serogroup B / Serotype NT and 3976 / Serogroup B / Serotype NT.">
    <original>S</original>
    <variation>P</variation>
    <location>
        <position position="68"/>
    </location>
</feature>
<feature type="sequence variant" description="In strain: BT490 / Serogroup B / Serotype 15.">
    <original>G</original>
    <variation>C</variation>
    <location>
        <position position="69"/>
    </location>
</feature>
<feature type="sequence variant" description="In strain: 3976 / Serogroup B / Serotype NT.">
    <original>P</original>
    <variation>S</variation>
    <location>
        <position position="84"/>
    </location>
</feature>
<feature type="sequence variant" description="In strain: BT490 / Serogroup B / Serotype 15, 952 / Serogroup B / Serotype NT and 3976 / Serogroup B / Serotype NT.">
    <original>I</original>
    <variation>V</variation>
    <location>
        <position position="96"/>
    </location>
</feature>
<feature type="sequence variant" description="In strain: 3976 / Serogroup B / Serotype NT.">
    <original>R</original>
    <variation>H</variation>
    <location>
        <position position="102"/>
    </location>
</feature>
<feature type="sequence variant" description="In strain: 952 / Serogroup B / Serotype NT and 3976 / Serogroup B / Serotype NT.">
    <original>I</original>
    <variation>V</variation>
    <location>
        <position position="105"/>
    </location>
</feature>
<feature type="sequence variant" description="In strain: BT490 / Serogroup B / Serotype 15, 952 / Serogroup B / Serotype NT and 3976 / Serogroup B / Serotype NT.">
    <original>N</original>
    <variation>T</variation>
    <location>
        <position position="125"/>
    </location>
</feature>
<feature type="sequence variant" description="In strain: 3976 / Serogroup B / Serotype NT.">
    <original>V</original>
    <variation>L</variation>
    <location>
        <position position="130"/>
    </location>
</feature>
<feature type="sequence variant" description="In strain: 3976 / Serogroup B / Serotype NT.">
    <original>R</original>
    <variation>C</variation>
    <location>
        <position position="135"/>
    </location>
</feature>
<feature type="sequence variant" description="In strain: BT490 / Serogroup B / Serotype 15.">
    <original>A</original>
    <variation>T</variation>
    <location>
        <position position="137"/>
    </location>
</feature>
<feature type="sequence variant" description="In strain: BT490 / Serogroup B / Serotype 15.">
    <original>Q</original>
    <variation>R</variation>
    <location>
        <position position="147"/>
    </location>
</feature>
<feature type="sequence variant" description="In strain: BT490 / Serogroup B / Serotype 15 and 952 / Serogroup B / Serotype NT.">
    <original>K</original>
    <variation>E</variation>
    <location>
        <position position="151"/>
    </location>
</feature>
<feature type="sequence variant" description="In strain: BT490 / Serogroup B / Serotype 15, 952 / Serogroup B / Serotype NT and 3976 / Serogroup B / Serotype NT.">
    <original>T</original>
    <variation>N</variation>
    <location>
        <position position="152"/>
    </location>
</feature>
<feature type="sequence variant" description="In strain: 952 / Serogroup B / Serotype NT.">
    <original>A</original>
    <variation>T</variation>
    <location>
        <position position="172"/>
    </location>
</feature>
<feature type="sequence variant" description="In strain: BT490 / Serogroup B / Serotype 15 and 3976 / Serogroup B / Serotype NT.">
    <original>S</original>
    <variation>A</variation>
    <location>
        <position position="174"/>
    </location>
</feature>
<feature type="sequence variant" description="In strain: 952 / Serogroup B /Serotype NT.">
    <original>AECI</original>
    <variation>ETCV</variation>
    <location>
        <begin position="175"/>
        <end position="178"/>
    </location>
</feature>
<feature type="sequence variant" description="In strain: BT490 / Serogroup B / Serotype 15, 952 / Serogroup B / Serotype NT and 3976 / Serogroup B / Serotype NT.">
    <original>I</original>
    <variation>T</variation>
    <location>
        <position position="188"/>
    </location>
</feature>
<feature type="sequence variant" description="In strain: BT490 / Serogroup B / Serotype 15, 952 / Serogroup B / Serotype NT and 3976 / Serogroup B / Serotype NT.">
    <location>
        <begin position="194"/>
        <end position="195"/>
    </location>
</feature>
<feature type="sequence variant" description="In strain: 3976 / Serogroup B / Serotype NT.">
    <original>G</original>
    <variation>C</variation>
    <location>
        <position position="196"/>
    </location>
</feature>
<feature type="sequence variant" description="In strain: 952 / Serogroup B / Serotype NT and 3976 / Serogroup B / Serotype NT.">
    <original>P</original>
    <variation>T</variation>
    <location>
        <position position="200"/>
    </location>
</feature>
<feature type="sequence variant" description="In strain: 3976 / Serogroup B / Serotype NT.">
    <original>A</original>
    <variation>T</variation>
    <location>
        <position position="206"/>
    </location>
</feature>
<feature type="sequence variant" description="In strain: BT490 / Serogroup B / Serotype 15.">
    <original>M</original>
    <variation>V</variation>
    <location>
        <position position="208"/>
    </location>
</feature>
<feature type="sequence variant" description="In strain: 3976 / Serogroup B / Serotype NT.">
    <original>F</original>
    <variation>Y</variation>
    <location>
        <position position="220"/>
    </location>
</feature>
<feature type="sequence variant" description="In strain: 952 / Serogroup B / Serotype NT and BT490 / Serogroup B / Serotype 15.">
    <original>S</original>
    <variation>R</variation>
    <location>
        <position position="230"/>
    </location>
</feature>
<feature type="sequence variant" description="In strain: BT490 / Serogroup B / Serotype 15, 952 / Serogroup B / Serotype NT and 3976 / Serogroup B / Serotype NT.">
    <original>T</original>
    <variation>M</variation>
    <location>
        <position position="231"/>
    </location>
</feature>
<feature type="sequence variant" description="In strain: BT490 / Serogroup B / Serotype 15.">
    <original>I</original>
    <variation>V</variation>
    <location>
        <position position="232"/>
    </location>
</feature>
<feature type="sequence variant" description="In strain: BT490 / Serogroup B / Serotype 15.">
    <original>A</original>
    <variation>S</variation>
    <location>
        <position position="239"/>
    </location>
</feature>
<feature type="sequence variant" description="In strain: 3976 / Serogroup B / Serotype NT.">
    <original>A</original>
    <variation>T</variation>
    <location>
        <position position="239"/>
    </location>
</feature>
<feature type="sequence variant" description="In strain: BT490 / Serogroup B / Serotype 15, 952 / Serogroup B / Serotype NT and 3976 / Serogroup B / Serotype NT.">
    <original>N</original>
    <variation>D</variation>
    <location>
        <position position="240"/>
    </location>
</feature>
<feature type="sequence variant" description="In strain: BT490 / Serogroup B / Serotype 15 and 3976 / Serogroup B / Serotype NT.">
    <original>E</original>
    <variation>A</variation>
    <location>
        <position position="243"/>
    </location>
</feature>
<feature type="sequence variant" description="In strain: 3976 / Serogroup B / Serotype NT.">
    <original>V</original>
    <variation>G</variation>
    <location>
        <position position="245"/>
    </location>
</feature>
<feature type="sequence variant" description="In strain: BT490 / Serogroup B / Serotype 15.">
    <original>L</original>
    <variation>V</variation>
    <location>
        <position position="253"/>
    </location>
</feature>
<feature type="sequence variant" description="In strain: BT490 / Serogroup B / Serotype 15 and 3976 / Serogroup B / Serotype NT.">
    <original>S</original>
    <variation>A</variation>
    <location>
        <position position="255"/>
    </location>
</feature>
<feature type="sequence variant" description="In strain: 3976 / Serogroup B / Serotype NT.">
    <original>Q</original>
    <variation>K</variation>
    <location>
        <position position="261"/>
    </location>
</feature>
<feature type="sequence variant" description="In strain: 3976 / Serogroup B / Serotype NT.">
    <original>V</original>
    <variation>A</variation>
    <location>
        <position position="277"/>
    </location>
</feature>